<keyword id="KW-0025">Alternative splicing</keyword>
<keyword id="KW-0039">Anion exchange</keyword>
<keyword id="KW-0050">Antiport</keyword>
<keyword id="KW-1003">Cell membrane</keyword>
<keyword id="KW-0325">Glycoprotein</keyword>
<keyword id="KW-0406">Ion transport</keyword>
<keyword id="KW-0472">Membrane</keyword>
<keyword id="KW-1185">Reference proteome</keyword>
<keyword id="KW-0812">Transmembrane</keyword>
<keyword id="KW-1133">Transmembrane helix</keyword>
<keyword id="KW-0813">Transport</keyword>
<evidence type="ECO:0000250" key="1">
    <source>
        <dbReference type="UniProtKB" id="A0A494BA31"/>
    </source>
</evidence>
<evidence type="ECO:0000255" key="2"/>
<evidence type="ECO:0000256" key="3">
    <source>
        <dbReference type="SAM" id="MobiDB-lite"/>
    </source>
</evidence>
<evidence type="ECO:0000269" key="4">
    <source>
    </source>
</evidence>
<evidence type="ECO:0000269" key="5">
    <source>
    </source>
</evidence>
<evidence type="ECO:0000269" key="6">
    <source ref="7"/>
</evidence>
<evidence type="ECO:0000303" key="7">
    <source>
    </source>
</evidence>
<evidence type="ECO:0000303" key="8">
    <source>
    </source>
</evidence>
<evidence type="ECO:0000303" key="9">
    <source ref="4"/>
</evidence>
<evidence type="ECO:0000303" key="10">
    <source ref="7"/>
</evidence>
<evidence type="ECO:0000305" key="11"/>
<evidence type="ECO:0000312" key="12">
    <source>
        <dbReference type="HGNC" id="HGNC:11035"/>
    </source>
</evidence>
<accession>Q96Q91</accession>
<accession>B7ZL63</accession>
<accession>D3DQD4</accession>
<accession>D3DQD5</accession>
<accession>D3DQD6</accession>
<accession>E9PDK1</accession>
<accession>Q96RM5</accession>
<accession>Q9BXF2</accession>
<accession>Q9BXN3</accession>
<name>B3A4_HUMAN</name>
<protein>
    <recommendedName>
        <fullName evidence="7">Anion exchange protein 4</fullName>
        <shortName>AE 4</shortName>
        <shortName>Anion exchanger 4</shortName>
    </recommendedName>
    <alternativeName>
        <fullName>Sodium bicarbonate cotransporter 5</fullName>
    </alternativeName>
    <alternativeName>
        <fullName>Solute carrier family 4 member 9</fullName>
    </alternativeName>
</protein>
<sequence length="983" mass="108248">MEMKLPGQEGFEASSAPRNIPSGELDSNPDPGTGPSPDGPSDTESKELGVPKDPLLFIQLNELLGWPQALEWRETGSSSASLLLDMGEMPSITLSTHLHHRWVLFEEKLEVAAGRWSAPHVPTLALPSLQKLRSLLAEGLVLLDCPAQSLLELVEQVTRVESLSPELRGQLQALLLQRPQHYNQTTGTRPCWGSTHPRKASDNEEAPLREQCQNPLRQKLPPGAEAGTVLAGELGFLAQPLGAFVRLRNPVVLGSLTEVSLPSRFFCLLLGPCMLGKGYHEMGRAAAVLLSDPQFQWSVRRASNLHDLLAALDAFLEEVTVLPPGRWDPTARIPPPKCLPSQHKRLPSQQREIRGPAVPRLTSAEDRHRHGPHAHSPELQRTGRLFGGLIQDVRRKVPWYPSDFLDALHLQCFSAVLYIYLATVTNAITFGGLLGDATDGAQGVLESFLGTAVAGAAFCLMAGQPLTILSSTGPVLVFERLLFSFSRDYSLDYLPFRLWVGIWVATFCLVLVATEASVLVRYFTRFTEEGFCALISLIFIYDAVGKMLNLTHTYPIQKPGSSAYGCLCQYPGPGGNESQWIRTRPKDRDDIVSMDLGLINASLLPPPECTRQGGHPRGPGCHTVPDIAFFSLLLFLTSFFFAMALKCVKTSRFFPSVVRKGLSDFSSVLAILLGCGLDAFLGLATPKLMVPREFKPTLPGRGWLVSPFGANPWWWSVAAALPALLLSILIFMDQQITAVILNRMEYRLQKGAGFHLDLFCVAVLMLLTSALGLPWYVSATVISLAHMDSLRRESRACAPGERPNFLGIREQRLTGLVVFILTGASIFLAPVLKFIPMPVLYGIFLYMGVAALSSIQFTNRVKLLLMPAKHQPDLLLLRHVPLTRVHLFTAIQLACLGLLWIIKSTPAAIIFPLMLLGLVGVRKALERVFSPQELLWLDELMPEEERSIPEKGLEPEHSFSGSDSEDSELMYQPKAPEINISVN</sequence>
<feature type="chain" id="PRO_0000079223" description="Anion exchange protein 4">
    <location>
        <begin position="1"/>
        <end position="983"/>
    </location>
</feature>
<feature type="transmembrane region" description="Helical" evidence="2">
    <location>
        <begin position="415"/>
        <end position="435"/>
    </location>
</feature>
<feature type="transmembrane region" description="Helical" evidence="2">
    <location>
        <begin position="443"/>
        <end position="463"/>
    </location>
</feature>
<feature type="transmembrane region" description="Helical" evidence="2">
    <location>
        <begin position="500"/>
        <end position="520"/>
    </location>
</feature>
<feature type="transmembrane region" description="Helical" evidence="2">
    <location>
        <begin position="530"/>
        <end position="550"/>
    </location>
</feature>
<feature type="transmembrane region" description="Helical" evidence="2">
    <location>
        <begin position="624"/>
        <end position="644"/>
    </location>
</feature>
<feature type="transmembrane region" description="Helical" evidence="2">
    <location>
        <begin position="665"/>
        <end position="685"/>
    </location>
</feature>
<feature type="transmembrane region" description="Helical" evidence="2">
    <location>
        <begin position="712"/>
        <end position="732"/>
    </location>
</feature>
<feature type="transmembrane region" description="Helical" evidence="2">
    <location>
        <begin position="758"/>
        <end position="778"/>
    </location>
</feature>
<feature type="transmembrane region" description="Helical" evidence="2">
    <location>
        <begin position="815"/>
        <end position="835"/>
    </location>
</feature>
<feature type="transmembrane region" description="Helical" evidence="2">
    <location>
        <begin position="837"/>
        <end position="857"/>
    </location>
</feature>
<feature type="transmembrane region" description="Helical" evidence="2">
    <location>
        <begin position="899"/>
        <end position="919"/>
    </location>
</feature>
<feature type="region of interest" description="Disordered" evidence="3">
    <location>
        <begin position="1"/>
        <end position="48"/>
    </location>
</feature>
<feature type="region of interest" description="Disordered" evidence="3">
    <location>
        <begin position="186"/>
        <end position="205"/>
    </location>
</feature>
<feature type="region of interest" description="Disordered" evidence="3">
    <location>
        <begin position="332"/>
        <end position="357"/>
    </location>
</feature>
<feature type="region of interest" description="Membrane (anion exchange)">
    <location>
        <begin position="415"/>
        <end position="983"/>
    </location>
</feature>
<feature type="region of interest" description="Disordered" evidence="3">
    <location>
        <begin position="946"/>
        <end position="983"/>
    </location>
</feature>
<feature type="compositionally biased region" description="Basic and acidic residues" evidence="3">
    <location>
        <begin position="946"/>
        <end position="957"/>
    </location>
</feature>
<feature type="glycosylation site" description="N-linked (GlcNAc...) asparagine" evidence="2">
    <location>
        <position position="183"/>
    </location>
</feature>
<feature type="glycosylation site" description="N-linked (GlcNAc...) asparagine" evidence="2">
    <location>
        <position position="576"/>
    </location>
</feature>
<feature type="glycosylation site" description="N-linked (GlcNAc...) asparagine" evidence="2">
    <location>
        <position position="600"/>
    </location>
</feature>
<feature type="glycosylation site" description="N-linked (GlcNAc...) asparagine" evidence="2">
    <location>
        <position position="979"/>
    </location>
</feature>
<feature type="splice variant" id="VSP_007085" description="In isoform 2, isoform 3 and isoform 4." evidence="7 8 9 10">
    <location>
        <begin position="77"/>
        <end position="100"/>
    </location>
</feature>
<feature type="splice variant" id="VSP_007086" description="In isoform 2." evidence="7">
    <location>
        <begin position="384"/>
        <end position="394"/>
    </location>
</feature>
<feature type="splice variant" id="VSP_007087" description="In isoform 2." evidence="7">
    <location>
        <begin position="592"/>
        <end position="594"/>
    </location>
</feature>
<feature type="splice variant" id="VSP_044785" description="In isoform 4." evidence="8">
    <location>
        <begin position="595"/>
        <end position="657"/>
    </location>
</feature>
<feature type="sequence conflict" description="In Ref. 5; AAI36263/AAI43603." evidence="11" ref="5">
    <original>G</original>
    <variation>W</variation>
    <location>
        <position position="23"/>
    </location>
</feature>
<feature type="sequence conflict" description="In Ref. 4; AAK69625." evidence="11" ref="4">
    <original>R</original>
    <variation>T</variation>
    <location>
        <position position="101"/>
    </location>
</feature>
<feature type="sequence conflict" description="In Ref. 1; AAK16733." evidence="11" ref="1">
    <original>V</original>
    <variation>M</variation>
    <location>
        <position position="453"/>
    </location>
</feature>
<feature type="sequence conflict" description="In Ref. 1; AAK16733." evidence="11" ref="1">
    <original>R</original>
    <variation>K</variation>
    <location>
        <position position="795"/>
    </location>
</feature>
<organism>
    <name type="scientific">Homo sapiens</name>
    <name type="common">Human</name>
    <dbReference type="NCBI Taxonomy" id="9606"/>
    <lineage>
        <taxon>Eukaryota</taxon>
        <taxon>Metazoa</taxon>
        <taxon>Chordata</taxon>
        <taxon>Craniata</taxon>
        <taxon>Vertebrata</taxon>
        <taxon>Euteleostomi</taxon>
        <taxon>Mammalia</taxon>
        <taxon>Eutheria</taxon>
        <taxon>Euarchontoglires</taxon>
        <taxon>Primates</taxon>
        <taxon>Haplorrhini</taxon>
        <taxon>Catarrhini</taxon>
        <taxon>Hominidae</taxon>
        <taxon>Homo</taxon>
    </lineage>
</organism>
<proteinExistence type="evidence at transcript level"/>
<dbReference type="EMBL" id="AF336237">
    <property type="protein sequence ID" value="AAK16733.1"/>
    <property type="molecule type" value="mRNA"/>
</dbReference>
<dbReference type="EMBL" id="AF313465">
    <property type="protein sequence ID" value="AAK28832.1"/>
    <property type="status" value="ALT_INIT"/>
    <property type="molecule type" value="mRNA"/>
</dbReference>
<dbReference type="EMBL" id="AF332961">
    <property type="protein sequence ID" value="AAK69625.1"/>
    <property type="molecule type" value="mRNA"/>
</dbReference>
<dbReference type="EMBL" id="AC008438">
    <property type="status" value="NOT_ANNOTATED_CDS"/>
    <property type="molecule type" value="Genomic_DNA"/>
</dbReference>
<dbReference type="EMBL" id="CH471062">
    <property type="protein sequence ID" value="EAW62062.1"/>
    <property type="molecule type" value="Genomic_DNA"/>
</dbReference>
<dbReference type="EMBL" id="CH471062">
    <property type="protein sequence ID" value="EAW62063.1"/>
    <property type="molecule type" value="Genomic_DNA"/>
</dbReference>
<dbReference type="EMBL" id="CH471062">
    <property type="protein sequence ID" value="EAW62064.1"/>
    <property type="molecule type" value="Genomic_DNA"/>
</dbReference>
<dbReference type="EMBL" id="CH471062">
    <property type="protein sequence ID" value="EAW62066.1"/>
    <property type="molecule type" value="Genomic_DNA"/>
</dbReference>
<dbReference type="EMBL" id="CH471062">
    <property type="protein sequence ID" value="EAW62067.1"/>
    <property type="molecule type" value="Genomic_DNA"/>
</dbReference>
<dbReference type="EMBL" id="CH471062">
    <property type="protein sequence ID" value="EAW62068.1"/>
    <property type="molecule type" value="Genomic_DNA"/>
</dbReference>
<dbReference type="EMBL" id="BC136262">
    <property type="protein sequence ID" value="AAI36263.1"/>
    <property type="molecule type" value="mRNA"/>
</dbReference>
<dbReference type="EMBL" id="BC143602">
    <property type="protein sequence ID" value="AAI43603.1"/>
    <property type="molecule type" value="mRNA"/>
</dbReference>
<dbReference type="EMBL" id="AB032762">
    <property type="protein sequence ID" value="BAA93010.1"/>
    <property type="molecule type" value="mRNA"/>
</dbReference>
<dbReference type="CCDS" id="CCDS47278.1">
    <molecule id="Q96Q91-3"/>
</dbReference>
<dbReference type="CCDS" id="CCDS58973.1">
    <molecule id="Q96Q91-1"/>
</dbReference>
<dbReference type="CCDS" id="CCDS58974.1">
    <molecule id="Q96Q91-4"/>
</dbReference>
<dbReference type="CCDS" id="CCDS58975.1">
    <molecule id="Q96Q91-2"/>
</dbReference>
<dbReference type="RefSeq" id="NP_001245355.1">
    <molecule id="Q96Q91-2"/>
    <property type="nucleotide sequence ID" value="NM_001258426.2"/>
</dbReference>
<dbReference type="RefSeq" id="NP_001245356.1">
    <molecule id="Q96Q91-4"/>
    <property type="nucleotide sequence ID" value="NM_001258427.2"/>
</dbReference>
<dbReference type="RefSeq" id="NP_001245357.1">
    <molecule id="Q96Q91-1"/>
    <property type="nucleotide sequence ID" value="NM_001258428.2"/>
</dbReference>
<dbReference type="RefSeq" id="NP_113655.2">
    <molecule id="Q96Q91-3"/>
    <property type="nucleotide sequence ID" value="NM_031467.3"/>
</dbReference>
<dbReference type="RefSeq" id="XP_005268578.3">
    <molecule id="Q96Q91-3"/>
    <property type="nucleotide sequence ID" value="XM_005268521.4"/>
</dbReference>
<dbReference type="RefSeq" id="XP_016865428.2">
    <molecule id="Q96Q91-2"/>
    <property type="nucleotide sequence ID" value="XM_017009939.2"/>
</dbReference>
<dbReference type="SMR" id="Q96Q91"/>
<dbReference type="FunCoup" id="Q96Q91">
    <property type="interactions" value="29"/>
</dbReference>
<dbReference type="STRING" id="9606.ENSP00000427661"/>
<dbReference type="TCDB" id="2.A.31.2.13">
    <property type="family name" value="the anion exchanger (ae) family"/>
</dbReference>
<dbReference type="GlyCosmos" id="Q96Q91">
    <property type="glycosylation" value="2 sites, No reported glycans"/>
</dbReference>
<dbReference type="GlyGen" id="Q96Q91">
    <property type="glycosylation" value="4 sites"/>
</dbReference>
<dbReference type="iPTMnet" id="Q96Q91"/>
<dbReference type="PhosphoSitePlus" id="Q96Q91"/>
<dbReference type="BioMuta" id="SLC4A9"/>
<dbReference type="DMDM" id="29427950"/>
<dbReference type="jPOST" id="Q96Q91"/>
<dbReference type="MassIVE" id="Q96Q91"/>
<dbReference type="PaxDb" id="9606-ENSP00000427661"/>
<dbReference type="PeptideAtlas" id="Q96Q91"/>
<dbReference type="Antibodypedia" id="62629">
    <property type="antibodies" value="111 antibodies from 20 providers"/>
</dbReference>
<dbReference type="DNASU" id="83697"/>
<dbReference type="Ensembl" id="ENST00000432095.6">
    <molecule id="Q96Q91-2"/>
    <property type="protein sequence ID" value="ENSP00000410056.2"/>
    <property type="gene ID" value="ENSG00000113073.15"/>
</dbReference>
<dbReference type="Ensembl" id="ENST00000506545.5">
    <molecule id="Q96Q91-4"/>
    <property type="protein sequence ID" value="ENSP00000422855.1"/>
    <property type="gene ID" value="ENSG00000113073.15"/>
</dbReference>
<dbReference type="Ensembl" id="ENST00000506757.7">
    <molecule id="Q96Q91-3"/>
    <property type="protein sequence ID" value="ENSP00000424424.1"/>
    <property type="gene ID" value="ENSG00000113073.15"/>
</dbReference>
<dbReference type="Ensembl" id="ENST00000507527.1">
    <molecule id="Q96Q91-1"/>
    <property type="protein sequence ID" value="ENSP00000427661.1"/>
    <property type="gene ID" value="ENSG00000113073.15"/>
</dbReference>
<dbReference type="GeneID" id="83697"/>
<dbReference type="KEGG" id="hsa:83697"/>
<dbReference type="MANE-Select" id="ENST00000506757.7">
    <molecule id="Q96Q91-3"/>
    <property type="protein sequence ID" value="ENSP00000424424.1"/>
    <property type="RefSeq nucleotide sequence ID" value="NM_031467.3"/>
    <property type="RefSeq protein sequence ID" value="NP_113655.2"/>
</dbReference>
<dbReference type="UCSC" id="uc003lfk.3">
    <molecule id="Q96Q91-1"/>
    <property type="organism name" value="human"/>
</dbReference>
<dbReference type="AGR" id="HGNC:11035"/>
<dbReference type="CTD" id="83697"/>
<dbReference type="DisGeNET" id="83697"/>
<dbReference type="GeneCards" id="SLC4A9"/>
<dbReference type="HGNC" id="HGNC:11035">
    <property type="gene designation" value="SLC4A9"/>
</dbReference>
<dbReference type="HPA" id="ENSG00000113073">
    <property type="expression patterns" value="Tissue enriched (kidney)"/>
</dbReference>
<dbReference type="MIM" id="610207">
    <property type="type" value="gene"/>
</dbReference>
<dbReference type="neXtProt" id="NX_Q96Q91"/>
<dbReference type="OpenTargets" id="ENSG00000113073"/>
<dbReference type="PharmGKB" id="PA35901"/>
<dbReference type="VEuPathDB" id="HostDB:ENSG00000113073"/>
<dbReference type="eggNOG" id="KOG1172">
    <property type="taxonomic scope" value="Eukaryota"/>
</dbReference>
<dbReference type="GeneTree" id="ENSGT00940000160970"/>
<dbReference type="HOGENOM" id="CLU_002289_5_1_1"/>
<dbReference type="InParanoid" id="Q96Q91"/>
<dbReference type="OMA" id="GEMPPIT"/>
<dbReference type="OrthoDB" id="1735926at2759"/>
<dbReference type="PAN-GO" id="Q96Q91">
    <property type="GO annotations" value="6 GO annotations based on evolutionary models"/>
</dbReference>
<dbReference type="PhylomeDB" id="Q96Q91"/>
<dbReference type="TreeFam" id="TF313630"/>
<dbReference type="PathwayCommons" id="Q96Q91"/>
<dbReference type="Reactome" id="R-HSA-425381">
    <property type="pathway name" value="Bicarbonate transporters"/>
</dbReference>
<dbReference type="BioGRID-ORCS" id="83697">
    <property type="hits" value="11 hits in 1136 CRISPR screens"/>
</dbReference>
<dbReference type="GenomeRNAi" id="83697"/>
<dbReference type="Pharos" id="Q96Q91">
    <property type="development level" value="Tbio"/>
</dbReference>
<dbReference type="PRO" id="PR:Q96Q91"/>
<dbReference type="Proteomes" id="UP000005640">
    <property type="component" value="Chromosome 5"/>
</dbReference>
<dbReference type="RNAct" id="Q96Q91">
    <property type="molecule type" value="protein"/>
</dbReference>
<dbReference type="Bgee" id="ENSG00000113073">
    <property type="expression patterns" value="Expressed in adult mammalian kidney and 127 other cell types or tissues"/>
</dbReference>
<dbReference type="GO" id="GO:0045177">
    <property type="term" value="C:apical part of cell"/>
    <property type="evidence" value="ECO:0007669"/>
    <property type="project" value="Ensembl"/>
</dbReference>
<dbReference type="GO" id="GO:0016323">
    <property type="term" value="C:basolateral plasma membrane"/>
    <property type="evidence" value="ECO:0000318"/>
    <property type="project" value="GO_Central"/>
</dbReference>
<dbReference type="GO" id="GO:0005886">
    <property type="term" value="C:plasma membrane"/>
    <property type="evidence" value="ECO:0000318"/>
    <property type="project" value="GO_Central"/>
</dbReference>
<dbReference type="GO" id="GO:0140900">
    <property type="term" value="F:chloride:bicarbonate antiporter activity"/>
    <property type="evidence" value="ECO:0000250"/>
    <property type="project" value="UniProtKB"/>
</dbReference>
<dbReference type="GO" id="GO:0140892">
    <property type="term" value="F:sodium,bicarbonate:chloride antiporter activity"/>
    <property type="evidence" value="ECO:0007669"/>
    <property type="project" value="Ensembl"/>
</dbReference>
<dbReference type="GO" id="GO:0008510">
    <property type="term" value="F:sodium:bicarbonate symporter activity"/>
    <property type="evidence" value="ECO:0000250"/>
    <property type="project" value="UniProtKB"/>
</dbReference>
<dbReference type="GO" id="GO:0015701">
    <property type="term" value="P:bicarbonate transport"/>
    <property type="evidence" value="ECO:0000318"/>
    <property type="project" value="GO_Central"/>
</dbReference>
<dbReference type="GO" id="GO:0051453">
    <property type="term" value="P:regulation of intracellular pH"/>
    <property type="evidence" value="ECO:0000318"/>
    <property type="project" value="GO_Central"/>
</dbReference>
<dbReference type="GO" id="GO:0046541">
    <property type="term" value="P:saliva secretion"/>
    <property type="evidence" value="ECO:0007669"/>
    <property type="project" value="Ensembl"/>
</dbReference>
<dbReference type="GO" id="GO:0035725">
    <property type="term" value="P:sodium ion transmembrane transport"/>
    <property type="evidence" value="ECO:0000250"/>
    <property type="project" value="UniProtKB"/>
</dbReference>
<dbReference type="GO" id="GO:0055085">
    <property type="term" value="P:transmembrane transport"/>
    <property type="evidence" value="ECO:0000318"/>
    <property type="project" value="GO_Central"/>
</dbReference>
<dbReference type="FunFam" id="1.10.287.570:FF:000001">
    <property type="entry name" value="Anion exchange protein"/>
    <property type="match status" value="1"/>
</dbReference>
<dbReference type="FunFam" id="3.40.930.10:FF:000011">
    <property type="entry name" value="Anion exchange protein 4"/>
    <property type="match status" value="1"/>
</dbReference>
<dbReference type="Gene3D" id="1.10.287.570">
    <property type="entry name" value="Helical hairpin bin"/>
    <property type="match status" value="1"/>
</dbReference>
<dbReference type="Gene3D" id="3.40.930.10">
    <property type="entry name" value="Mannitol-specific EII, Chain A"/>
    <property type="match status" value="1"/>
</dbReference>
<dbReference type="InterPro" id="IPR013769">
    <property type="entry name" value="Band3_cytoplasmic_dom"/>
</dbReference>
<dbReference type="InterPro" id="IPR011531">
    <property type="entry name" value="HCO3_transpt-like_TM_dom"/>
</dbReference>
<dbReference type="InterPro" id="IPR003020">
    <property type="entry name" value="HCO3_transpt_euk"/>
</dbReference>
<dbReference type="InterPro" id="IPR003024">
    <property type="entry name" value="Na/HCO3_transpt"/>
</dbReference>
<dbReference type="InterPro" id="IPR016152">
    <property type="entry name" value="PTrfase/Anion_transptr"/>
</dbReference>
<dbReference type="NCBIfam" id="TIGR00834">
    <property type="entry name" value="ae"/>
    <property type="match status" value="1"/>
</dbReference>
<dbReference type="PANTHER" id="PTHR11453">
    <property type="entry name" value="ANION EXCHANGE PROTEIN"/>
    <property type="match status" value="1"/>
</dbReference>
<dbReference type="PANTHER" id="PTHR11453:SF52">
    <property type="entry name" value="ANION EXCHANGE PROTEIN 4"/>
    <property type="match status" value="1"/>
</dbReference>
<dbReference type="Pfam" id="PF07565">
    <property type="entry name" value="Band_3_cyto"/>
    <property type="match status" value="2"/>
</dbReference>
<dbReference type="Pfam" id="PF00955">
    <property type="entry name" value="HCO3_cotransp"/>
    <property type="match status" value="1"/>
</dbReference>
<dbReference type="PRINTS" id="PR01231">
    <property type="entry name" value="HCO3TRNSPORT"/>
</dbReference>
<dbReference type="PRINTS" id="PR01232">
    <property type="entry name" value="NAHCO3TRSPRT"/>
</dbReference>
<dbReference type="SUPFAM" id="SSF55804">
    <property type="entry name" value="Phoshotransferase/anion transport protein"/>
    <property type="match status" value="1"/>
</dbReference>
<reference key="1">
    <citation type="journal article" date="2001" name="Biochem. Biophys. Res. Commun.">
        <title>Human BTR1, a new bicarbonate transporter superfamily member and human AE4 from kidney.</title>
        <authorList>
            <person name="Parker M.D."/>
            <person name="Ourmozdi E.P."/>
            <person name="Tanner M.J.A."/>
        </authorList>
    </citation>
    <scope>NUCLEOTIDE SEQUENCE [MRNA] (ISOFORM 2)</scope>
    <source>
        <tissue>Kidney</tissue>
        <tissue>Testis</tissue>
    </source>
</reference>
<reference key="2">
    <citation type="journal article" date="2001" name="Genome Biol.">
        <title>A novel sodium bicarbonate cotransporter-like gene in an ancient duplicated region: SLC4A9 at 5q31.</title>
        <authorList>
            <person name="Lipovich L."/>
            <person name="Lynch E.D."/>
            <person name="Lee M.K."/>
            <person name="King M.-C."/>
        </authorList>
    </citation>
    <scope>NUCLEOTIDE SEQUENCE [MRNA] (ISOFORM 1)</scope>
    <scope>TISSUE SPECIFICITY</scope>
    <source>
        <tissue>Kidney</tissue>
    </source>
</reference>
<reference key="3">
    <citation type="journal article" date="2004" name="Nature">
        <title>The DNA sequence and comparative analysis of human chromosome 5.</title>
        <authorList>
            <person name="Schmutz J."/>
            <person name="Martin J."/>
            <person name="Terry A."/>
            <person name="Couronne O."/>
            <person name="Grimwood J."/>
            <person name="Lowry S."/>
            <person name="Gordon L.A."/>
            <person name="Scott D."/>
            <person name="Xie G."/>
            <person name="Huang W."/>
            <person name="Hellsten U."/>
            <person name="Tran-Gyamfi M."/>
            <person name="She X."/>
            <person name="Prabhakar S."/>
            <person name="Aerts A."/>
            <person name="Altherr M."/>
            <person name="Bajorek E."/>
            <person name="Black S."/>
            <person name="Branscomb E."/>
            <person name="Caoile C."/>
            <person name="Challacombe J.F."/>
            <person name="Chan Y.M."/>
            <person name="Denys M."/>
            <person name="Detter J.C."/>
            <person name="Escobar J."/>
            <person name="Flowers D."/>
            <person name="Fotopulos D."/>
            <person name="Glavina T."/>
            <person name="Gomez M."/>
            <person name="Gonzales E."/>
            <person name="Goodstein D."/>
            <person name="Grigoriev I."/>
            <person name="Groza M."/>
            <person name="Hammon N."/>
            <person name="Hawkins T."/>
            <person name="Haydu L."/>
            <person name="Israni S."/>
            <person name="Jett J."/>
            <person name="Kadner K."/>
            <person name="Kimball H."/>
            <person name="Kobayashi A."/>
            <person name="Lopez F."/>
            <person name="Lou Y."/>
            <person name="Martinez D."/>
            <person name="Medina C."/>
            <person name="Morgan J."/>
            <person name="Nandkeshwar R."/>
            <person name="Noonan J.P."/>
            <person name="Pitluck S."/>
            <person name="Pollard M."/>
            <person name="Predki P."/>
            <person name="Priest J."/>
            <person name="Ramirez L."/>
            <person name="Retterer J."/>
            <person name="Rodriguez A."/>
            <person name="Rogers S."/>
            <person name="Salamov A."/>
            <person name="Salazar A."/>
            <person name="Thayer N."/>
            <person name="Tice H."/>
            <person name="Tsai M."/>
            <person name="Ustaszewska A."/>
            <person name="Vo N."/>
            <person name="Wheeler J."/>
            <person name="Wu K."/>
            <person name="Yang J."/>
            <person name="Dickson M."/>
            <person name="Cheng J.-F."/>
            <person name="Eichler E.E."/>
            <person name="Olsen A."/>
            <person name="Pennacchio L.A."/>
            <person name="Rokhsar D.S."/>
            <person name="Richardson P."/>
            <person name="Lucas S.M."/>
            <person name="Myers R.M."/>
            <person name="Rubin E.M."/>
        </authorList>
    </citation>
    <scope>NUCLEOTIDE SEQUENCE [LARGE SCALE GENOMIC DNA]</scope>
</reference>
<reference key="4">
    <citation type="submission" date="2000-12" db="EMBL/GenBank/DDBJ databases">
        <title>Cloning and characterization of human AE4.</title>
        <authorList>
            <person name="Karet F.E."/>
        </authorList>
    </citation>
    <scope>NUCLEOTIDE SEQUENCE [MRNA] (ISOFORM 3)</scope>
</reference>
<reference key="5">
    <citation type="journal article" date="2004" name="Genome Res.">
        <title>The status, quality, and expansion of the NIH full-length cDNA project: the Mammalian Gene Collection (MGC).</title>
        <authorList>
            <consortium name="The MGC Project Team"/>
        </authorList>
    </citation>
    <scope>NUCLEOTIDE SEQUENCE [LARGE SCALE MRNA] (ISOFORM 4)</scope>
    <source>
        <tissue>Lung</tissue>
        <tissue>Placenta</tissue>
        <tissue>Testis</tissue>
    </source>
</reference>
<reference key="6">
    <citation type="submission" date="2005-09" db="EMBL/GenBank/DDBJ databases">
        <authorList>
            <person name="Mural R.J."/>
            <person name="Istrail S."/>
            <person name="Sutton G.G."/>
            <person name="Florea L."/>
            <person name="Halpern A.L."/>
            <person name="Mobarry C.M."/>
            <person name="Lippert R."/>
            <person name="Walenz B."/>
            <person name="Shatkay H."/>
            <person name="Dew I."/>
            <person name="Miller J.R."/>
            <person name="Flanigan M.J."/>
            <person name="Edwards N.J."/>
            <person name="Bolanos R."/>
            <person name="Fasulo D."/>
            <person name="Halldorsson B.V."/>
            <person name="Hannenhalli S."/>
            <person name="Turner R."/>
            <person name="Yooseph S."/>
            <person name="Lu F."/>
            <person name="Nusskern D.R."/>
            <person name="Shue B.C."/>
            <person name="Zheng X.H."/>
            <person name="Zhong F."/>
            <person name="Delcher A.L."/>
            <person name="Huson D.H."/>
            <person name="Kravitz S.A."/>
            <person name="Mouchard L."/>
            <person name="Reinert K."/>
            <person name="Remington K.A."/>
            <person name="Clark A.G."/>
            <person name="Waterman M.S."/>
            <person name="Eichler E.E."/>
            <person name="Adams M.D."/>
            <person name="Hunkapiller M.W."/>
            <person name="Myers E.W."/>
            <person name="Venter J.C."/>
        </authorList>
    </citation>
    <scope>NUCLEOTIDE SEQUENCE [LARGE SCALE GENOMIC DNA]</scope>
</reference>
<reference key="7">
    <citation type="submission" date="1999-09" db="EMBL/GenBank/DDBJ databases">
        <title>Molecular cloning of human sodium bicarbonate cotransporter 5.</title>
        <authorList>
            <person name="Ishibashi K."/>
        </authorList>
    </citation>
    <scope>NUCLEOTIDE SEQUENCE [MRNA] OF 3-983 (ISOFORM 3)</scope>
    <scope>TISSUE SPECIFICITY</scope>
    <source>
        <tissue>Testis</tissue>
    </source>
</reference>
<reference key="8">
    <citation type="journal article" date="2016" name="J. Gen. Physiol.">
        <title>Ae4 (Slc4a9) is an electroneutral monovalent cation-dependent Cl-/HCO3- exchanger.</title>
        <authorList>
            <person name="Pena-Muenzenmayer G."/>
            <person name="George A.T."/>
            <person name="Shull G.E."/>
            <person name="Melvin J.E."/>
            <person name="Catalan M.A."/>
        </authorList>
    </citation>
    <scope>FUNCTION</scope>
    <scope>TRANSPORTER ACTIVITY</scope>
</reference>
<gene>
    <name evidence="12" type="primary">SLC4A9</name>
    <name evidence="7" type="synonym">AE4</name>
    <name type="synonym">SBC5</name>
</gene>
<comment type="function">
    <text evidence="1 5">Electroneutral Cl(-)/HCO3(-) antiporter that favors chloride ion entry and efflux of hydrogencarbonate and sodium ion across the basolateral membrane and may participate in salivary secretion (PubMed:27114614). Also mediates Cl(-)/HCO3(-) exchange activity in the presence of K(+) as well as Cs(+), Li(+), and Rb(+) (By similarity). Does not contribute to Cl(-)/HCO3(-) exchanger in the apical membrane of the upper villous epithelium (By similarity).</text>
</comment>
<comment type="catalytic activity">
    <reaction evidence="5">
        <text>2 hydrogencarbonate(out) + chloride(in) + Na(+)(out) = 2 hydrogencarbonate(in) + chloride(out) + Na(+)(in)</text>
        <dbReference type="Rhea" id="RHEA:72739"/>
        <dbReference type="ChEBI" id="CHEBI:17544"/>
        <dbReference type="ChEBI" id="CHEBI:17996"/>
        <dbReference type="ChEBI" id="CHEBI:29101"/>
    </reaction>
</comment>
<comment type="catalytic activity">
    <reaction evidence="1">
        <text>K(+)(in) + 2 hydrogencarbonate(in) + chloride(out) = K(+)(out) + 2 hydrogencarbonate(out) + chloride(in)</text>
        <dbReference type="Rhea" id="RHEA:75059"/>
        <dbReference type="ChEBI" id="CHEBI:17544"/>
        <dbReference type="ChEBI" id="CHEBI:17996"/>
        <dbReference type="ChEBI" id="CHEBI:29103"/>
    </reaction>
</comment>
<comment type="catalytic activity">
    <reaction evidence="1">
        <text>Li(+)(in) + 2 hydrogencarbonate(in) + chloride(out) = Li(+)(out) + 2 hydrogencarbonate(out) + chloride(in)</text>
        <dbReference type="Rhea" id="RHEA:75063"/>
        <dbReference type="ChEBI" id="CHEBI:17544"/>
        <dbReference type="ChEBI" id="CHEBI:17996"/>
        <dbReference type="ChEBI" id="CHEBI:49713"/>
    </reaction>
</comment>
<comment type="catalytic activity">
    <reaction evidence="1">
        <text>Rb(+)(in) + 2 hydrogencarbonate(in) + chloride(out) = Rb(+)(out) + 2 hydrogencarbonate(out) + chloride(in)</text>
        <dbReference type="Rhea" id="RHEA:75067"/>
        <dbReference type="ChEBI" id="CHEBI:17544"/>
        <dbReference type="ChEBI" id="CHEBI:17996"/>
        <dbReference type="ChEBI" id="CHEBI:49847"/>
    </reaction>
</comment>
<comment type="catalytic activity">
    <reaction evidence="1">
        <text>Cs(+)(in) + 2 hydrogencarbonate(in) + chloride(out) = Cs(+)(out) + 2 hydrogencarbonate(out) + chloride(in)</text>
        <dbReference type="Rhea" id="RHEA:75071"/>
        <dbReference type="ChEBI" id="CHEBI:17544"/>
        <dbReference type="ChEBI" id="CHEBI:17996"/>
        <dbReference type="ChEBI" id="CHEBI:49547"/>
    </reaction>
</comment>
<comment type="subcellular location">
    <subcellularLocation>
        <location evidence="1">Basolateral cell membrane</location>
        <topology evidence="2">Multi-pass membrane protein</topology>
    </subcellularLocation>
    <text evidence="1">Localized in the basolateral membrane of the cortical collecting duct (CCD)and submandibular gland (SMG) duct.</text>
</comment>
<comment type="alternative products">
    <event type="alternative splicing"/>
    <isoform>
        <id>Q96Q91-1</id>
        <name>1</name>
        <sequence type="displayed"/>
    </isoform>
    <isoform>
        <id>Q96Q91-2</id>
        <name>2</name>
        <sequence type="described" ref="VSP_007085 VSP_007086 VSP_007087"/>
    </isoform>
    <isoform>
        <id>Q96Q91-3</id>
        <name>3</name>
        <sequence type="described" ref="VSP_007085"/>
    </isoform>
    <isoform>
        <id>Q96Q91-4</id>
        <name>4</name>
        <sequence type="described" ref="VSP_007085 VSP_044785"/>
    </isoform>
</comment>
<comment type="tissue specificity">
    <text evidence="4 6">Kidney specific.</text>
</comment>
<comment type="similarity">
    <text evidence="11">Belongs to the anion exchanger (TC 2.A.31) family.</text>
</comment>
<comment type="sequence caution" evidence="11">
    <conflict type="erroneous initiation">
        <sequence resource="EMBL-CDS" id="AAK28832"/>
    </conflict>
    <text>Extended N-terminus.</text>
</comment>